<feature type="chain" id="PRO_0000291439" description="Type IV secretion system protein VirB11">
    <location>
        <begin position="1"/>
        <end position="361"/>
    </location>
</feature>
<feature type="binding site" evidence="1">
    <location>
        <begin position="182"/>
        <end position="189"/>
    </location>
    <ligand>
        <name>ATP</name>
        <dbReference type="ChEBI" id="CHEBI:30616"/>
    </ligand>
</feature>
<feature type="sequence conflict" description="In Ref. 1; AAD56621." evidence="2" ref="1">
    <original>T</original>
    <variation>P</variation>
    <location>
        <position position="125"/>
    </location>
</feature>
<feature type="sequence conflict" description="In Ref. 1; AAD56621." evidence="2" ref="1">
    <original>T</original>
    <variation>A</variation>
    <location>
        <position position="207"/>
    </location>
</feature>
<feature type="helix" evidence="3">
    <location>
        <begin position="13"/>
        <end position="19"/>
    </location>
</feature>
<feature type="helix" evidence="3">
    <location>
        <begin position="21"/>
        <end position="25"/>
    </location>
</feature>
<feature type="helix" evidence="3">
    <location>
        <begin position="27"/>
        <end position="29"/>
    </location>
</feature>
<feature type="helix" evidence="3">
    <location>
        <begin position="30"/>
        <end position="33"/>
    </location>
</feature>
<feature type="strand" evidence="3">
    <location>
        <begin position="38"/>
        <end position="45"/>
    </location>
</feature>
<feature type="strand" evidence="3">
    <location>
        <begin position="48"/>
        <end position="53"/>
    </location>
</feature>
<feature type="strand" evidence="3">
    <location>
        <begin position="56"/>
        <end position="61"/>
    </location>
</feature>
<feature type="helix" evidence="3">
    <location>
        <begin position="67"/>
        <end position="80"/>
    </location>
</feature>
<feature type="strand" evidence="3">
    <location>
        <begin position="86"/>
        <end position="89"/>
    </location>
</feature>
<feature type="strand" evidence="3">
    <location>
        <begin position="91"/>
        <end position="95"/>
    </location>
</feature>
<feature type="strand" evidence="3">
    <location>
        <begin position="101"/>
        <end position="105"/>
    </location>
</feature>
<feature type="turn" evidence="3">
    <location>
        <begin position="107"/>
        <end position="109"/>
    </location>
</feature>
<feature type="strand" evidence="3">
    <location>
        <begin position="116"/>
        <end position="120"/>
    </location>
</feature>
<feature type="helix" evidence="3">
    <location>
        <begin position="129"/>
        <end position="134"/>
    </location>
</feature>
<feature type="turn" evidence="3">
    <location>
        <begin position="135"/>
        <end position="138"/>
    </location>
</feature>
<feature type="helix" evidence="3">
    <location>
        <begin position="150"/>
        <end position="161"/>
    </location>
</feature>
<feature type="helix" evidence="3">
    <location>
        <begin position="164"/>
        <end position="173"/>
    </location>
</feature>
<feature type="strand" evidence="3">
    <location>
        <begin position="178"/>
        <end position="186"/>
    </location>
</feature>
<feature type="helix" evidence="3">
    <location>
        <begin position="188"/>
        <end position="196"/>
    </location>
</feature>
<feature type="strand" evidence="3">
    <location>
        <begin position="205"/>
        <end position="212"/>
    </location>
</feature>
<feature type="strand" evidence="3">
    <location>
        <begin position="220"/>
        <end position="226"/>
    </location>
</feature>
<feature type="helix" evidence="3">
    <location>
        <begin position="241"/>
        <end position="248"/>
    </location>
</feature>
<feature type="strand" evidence="3">
    <location>
        <begin position="254"/>
        <end position="259"/>
    </location>
</feature>
<feature type="helix" evidence="3">
    <location>
        <begin position="265"/>
        <end position="274"/>
    </location>
</feature>
<feature type="strand" evidence="3">
    <location>
        <begin position="281"/>
        <end position="285"/>
    </location>
</feature>
<feature type="helix" evidence="3">
    <location>
        <begin position="289"/>
        <end position="300"/>
    </location>
</feature>
<feature type="helix" evidence="3">
    <location>
        <begin position="306"/>
        <end position="308"/>
    </location>
</feature>
<feature type="helix" evidence="3">
    <location>
        <begin position="311"/>
        <end position="321"/>
    </location>
</feature>
<feature type="strand" evidence="3">
    <location>
        <begin position="324"/>
        <end position="329"/>
    </location>
</feature>
<feature type="strand" evidence="3">
    <location>
        <begin position="333"/>
        <end position="335"/>
    </location>
</feature>
<feature type="strand" evidence="3">
    <location>
        <begin position="338"/>
        <end position="345"/>
    </location>
</feature>
<feature type="helix" evidence="3">
    <location>
        <begin position="347"/>
        <end position="352"/>
    </location>
</feature>
<keyword id="KW-0002">3D-structure</keyword>
<keyword id="KW-0067">ATP-binding</keyword>
<keyword id="KW-0963">Cytoplasm</keyword>
<keyword id="KW-0547">Nucleotide-binding</keyword>
<keyword id="KW-0843">Virulence</keyword>
<gene>
    <name type="primary">virB11</name>
    <name type="ordered locus">BRA0059</name>
    <name type="ordered locus">BS1330_II0059</name>
</gene>
<sequence>MMSNRSDFIVPDEAAVKRAASVNFHLEPLRPWLDDPQITEVCVNRPGEVFCERASAWEYYAVPNLDYEHLISLGTATARFVDQDISDSRPVLSAILPMGERIQIVRPPACEHGTISVTIRKPSFTRRTLEDYAQQGFFKHVRPMSKSLTPFEQELLALKEAGDYMSFLRRAVQLERVIVVAGETGSGKTTLMKALMQEIPFDQRLITIEDVPELFLPDHPNHVHLFYPSEAKEEENAPVTAATLLRSCLRMKPTRILLAELRGGEAYDFINVAASGHGGSITSCHAGSCELTFERLALMVLQNRQGRQLPYEIIRRLLYLVVDVVVHVHNGVHDGTGRHISEVWYDPNTKRALSLQHSEKT</sequence>
<accession>Q8FXK7</accession>
<accession>G0KEQ7</accession>
<accession>Q9RPX4</accession>
<evidence type="ECO:0000255" key="1"/>
<evidence type="ECO:0000305" key="2"/>
<evidence type="ECO:0007829" key="3">
    <source>
        <dbReference type="PDB" id="2GZA"/>
    </source>
</evidence>
<protein>
    <recommendedName>
        <fullName>Type IV secretion system protein VirB11</fullName>
    </recommendedName>
</protein>
<dbReference type="EMBL" id="AF141604">
    <property type="protein sequence ID" value="AAD56621.1"/>
    <property type="status" value="ALT_FRAME"/>
    <property type="molecule type" value="Genomic_DNA"/>
</dbReference>
<dbReference type="EMBL" id="AE014292">
    <property type="protein sequence ID" value="AAN33271.1"/>
    <property type="molecule type" value="Genomic_DNA"/>
</dbReference>
<dbReference type="EMBL" id="CP002998">
    <property type="protein sequence ID" value="AEM19551.1"/>
    <property type="molecule type" value="Genomic_DNA"/>
</dbReference>
<dbReference type="PDB" id="2GZA">
    <property type="method" value="X-ray"/>
    <property type="resolution" value="2.60 A"/>
    <property type="chains" value="A/B/C=1-361"/>
</dbReference>
<dbReference type="PDBsum" id="2GZA"/>
<dbReference type="SMR" id="Q8FXK7"/>
<dbReference type="KEGG" id="bms:BRA0059"/>
<dbReference type="KEGG" id="bsi:BS1330_II0059"/>
<dbReference type="HOGENOM" id="CLU_005379_3_1_5"/>
<dbReference type="EvolutionaryTrace" id="Q8FXK7"/>
<dbReference type="PRO" id="PR:Q8FXK7"/>
<dbReference type="Proteomes" id="UP000007104">
    <property type="component" value="Chromosome II"/>
</dbReference>
<dbReference type="GO" id="GO:0005737">
    <property type="term" value="C:cytoplasm"/>
    <property type="evidence" value="ECO:0007669"/>
    <property type="project" value="UniProtKB-SubCell"/>
</dbReference>
<dbReference type="GO" id="GO:0043684">
    <property type="term" value="C:type IV secretion system complex"/>
    <property type="evidence" value="ECO:0007669"/>
    <property type="project" value="InterPro"/>
</dbReference>
<dbReference type="GO" id="GO:0005524">
    <property type="term" value="F:ATP binding"/>
    <property type="evidence" value="ECO:0007669"/>
    <property type="project" value="UniProtKB-KW"/>
</dbReference>
<dbReference type="GO" id="GO:0016887">
    <property type="term" value="F:ATP hydrolysis activity"/>
    <property type="evidence" value="ECO:0007669"/>
    <property type="project" value="InterPro"/>
</dbReference>
<dbReference type="GO" id="GO:0044097">
    <property type="term" value="P:secretion by the type IV secretion system"/>
    <property type="evidence" value="ECO:0007669"/>
    <property type="project" value="InterPro"/>
</dbReference>
<dbReference type="CDD" id="cd01130">
    <property type="entry name" value="VirB11-like_ATPase"/>
    <property type="match status" value="1"/>
</dbReference>
<dbReference type="Gene3D" id="3.30.450.90">
    <property type="match status" value="1"/>
</dbReference>
<dbReference type="Gene3D" id="3.40.50.300">
    <property type="entry name" value="P-loop containing nucleotide triphosphate hydrolases"/>
    <property type="match status" value="1"/>
</dbReference>
<dbReference type="InterPro" id="IPR027417">
    <property type="entry name" value="P-loop_NTPase"/>
</dbReference>
<dbReference type="InterPro" id="IPR025662">
    <property type="entry name" value="Sigma_54_int_dom_ATP-bd_1"/>
</dbReference>
<dbReference type="InterPro" id="IPR001482">
    <property type="entry name" value="T2SS/T4SS_dom"/>
</dbReference>
<dbReference type="InterPro" id="IPR050921">
    <property type="entry name" value="T4SS_GSP_E_ATPase"/>
</dbReference>
<dbReference type="InterPro" id="IPR014155">
    <property type="entry name" value="VirB11"/>
</dbReference>
<dbReference type="NCBIfam" id="TIGR02788">
    <property type="entry name" value="VirB11"/>
    <property type="match status" value="1"/>
</dbReference>
<dbReference type="PANTHER" id="PTHR30486">
    <property type="entry name" value="TWITCHING MOTILITY PROTEIN PILT"/>
    <property type="match status" value="1"/>
</dbReference>
<dbReference type="PANTHER" id="PTHR30486:SF6">
    <property type="entry name" value="TYPE IV PILUS RETRACTATION ATPASE PILT"/>
    <property type="match status" value="1"/>
</dbReference>
<dbReference type="Pfam" id="PF00437">
    <property type="entry name" value="T2SSE"/>
    <property type="match status" value="1"/>
</dbReference>
<dbReference type="SUPFAM" id="SSF52540">
    <property type="entry name" value="P-loop containing nucleoside triphosphate hydrolases"/>
    <property type="match status" value="1"/>
</dbReference>
<organism>
    <name type="scientific">Brucella suis biovar 1 (strain 1330)</name>
    <dbReference type="NCBI Taxonomy" id="204722"/>
    <lineage>
        <taxon>Bacteria</taxon>
        <taxon>Pseudomonadati</taxon>
        <taxon>Pseudomonadota</taxon>
        <taxon>Alphaproteobacteria</taxon>
        <taxon>Hyphomicrobiales</taxon>
        <taxon>Brucellaceae</taxon>
        <taxon>Brucella/Ochrobactrum group</taxon>
        <taxon>Brucella</taxon>
    </lineage>
</organism>
<reference key="1">
    <citation type="journal article" date="1999" name="Mol. Microbiol.">
        <title>A homologue of the Agrobacterium tumefaciens VirB and Bordetella pertussis Ptl type IV secretion systems is essential for intracellular survival of Brucella suis.</title>
        <authorList>
            <person name="O'Callaghan D."/>
            <person name="Cazevieille C."/>
            <person name="Allardet-Servent A."/>
            <person name="Boschiroli M.L."/>
            <person name="Bourg G."/>
            <person name="Foulongne V."/>
            <person name="Frutos P."/>
            <person name="Kulakov Y."/>
            <person name="Ramuz M."/>
        </authorList>
    </citation>
    <scope>NUCLEOTIDE SEQUENCE [GENOMIC DNA]</scope>
    <source>
        <strain>1330</strain>
    </source>
</reference>
<reference key="2">
    <citation type="journal article" date="2002" name="Proc. Natl. Acad. Sci. U.S.A.">
        <title>The Brucella suis virB operon is induced intracellularly in macrophages.</title>
        <authorList>
            <person name="Boschiroli M.L."/>
            <person name="Ouahrani-Bettache S."/>
            <person name="Foulongne V."/>
            <person name="Michaux-Charachon S."/>
            <person name="Bourg G."/>
            <person name="Allardet-Servent A."/>
            <person name="Cazevieille C."/>
            <person name="Liautard J.P."/>
            <person name="Ramuz M."/>
            <person name="O'Callaghan D."/>
        </authorList>
    </citation>
    <scope>NUCLEOTIDE SEQUENCE [GENOMIC DNA]</scope>
    <scope>EXPRESSION CONDITIONS</scope>
    <source>
        <strain>1330</strain>
    </source>
</reference>
<reference key="3">
    <citation type="journal article" date="2002" name="Proc. Natl. Acad. Sci. U.S.A.">
        <title>The Brucella suis genome reveals fundamental similarities between animal and plant pathogens and symbionts.</title>
        <authorList>
            <person name="Paulsen I.T."/>
            <person name="Seshadri R."/>
            <person name="Nelson K.E."/>
            <person name="Eisen J.A."/>
            <person name="Heidelberg J.F."/>
            <person name="Read T.D."/>
            <person name="Dodson R.J."/>
            <person name="Umayam L.A."/>
            <person name="Brinkac L.M."/>
            <person name="Beanan M.J."/>
            <person name="Daugherty S.C."/>
            <person name="DeBoy R.T."/>
            <person name="Durkin A.S."/>
            <person name="Kolonay J.F."/>
            <person name="Madupu R."/>
            <person name="Nelson W.C."/>
            <person name="Ayodeji B."/>
            <person name="Kraul M."/>
            <person name="Shetty J."/>
            <person name="Malek J.A."/>
            <person name="Van Aken S.E."/>
            <person name="Riedmuller S."/>
            <person name="Tettelin H."/>
            <person name="Gill S.R."/>
            <person name="White O."/>
            <person name="Salzberg S.L."/>
            <person name="Hoover D.L."/>
            <person name="Lindler L.E."/>
            <person name="Halling S.M."/>
            <person name="Boyle S.M."/>
            <person name="Fraser C.M."/>
        </authorList>
    </citation>
    <scope>NUCLEOTIDE SEQUENCE [LARGE SCALE GENOMIC DNA]</scope>
    <source>
        <strain>1330</strain>
    </source>
</reference>
<reference key="4">
    <citation type="journal article" date="2011" name="J. Bacteriol.">
        <title>Revised genome sequence of Brucella suis 1330.</title>
        <authorList>
            <person name="Tae H."/>
            <person name="Shallom S."/>
            <person name="Settlage R."/>
            <person name="Preston D."/>
            <person name="Adams L.G."/>
            <person name="Garner H.R."/>
        </authorList>
    </citation>
    <scope>NUCLEOTIDE SEQUENCE [LARGE SCALE GENOMIC DNA]</scope>
    <source>
        <strain>1330</strain>
    </source>
</reference>
<name>VIRBB_BRUSU</name>
<proteinExistence type="evidence at protein level"/>
<comment type="function">
    <text>The VirB system could be required for the establishment of the replication niche in the host.</text>
</comment>
<comment type="subcellular location">
    <subcellularLocation>
        <location evidence="2">Cytoplasm</location>
    </subcellularLocation>
</comment>
<comment type="induction">
    <text>Specifically induced within macrophages by phagosome acidification. Induced at 37 degrees Celsius in minimal medium, suggesting that nutritional stress is a regulating signal.</text>
</comment>
<comment type="miscellaneous">
    <text>Transcription of the operon is maximal in early exponential phase.</text>
</comment>
<comment type="similarity">
    <text evidence="2">Belongs to the GSP E family.</text>
</comment>
<comment type="sequence caution" evidence="2">
    <conflict type="frameshift">
        <sequence resource="EMBL-CDS" id="AAD56621"/>
    </conflict>
</comment>